<organism>
    <name type="scientific">Mesoplasma florum (strain ATCC 33453 / NBRC 100688 / NCTC 11704 / L1)</name>
    <name type="common">Acholeplasma florum</name>
    <dbReference type="NCBI Taxonomy" id="265311"/>
    <lineage>
        <taxon>Bacteria</taxon>
        <taxon>Bacillati</taxon>
        <taxon>Mycoplasmatota</taxon>
        <taxon>Mollicutes</taxon>
        <taxon>Entomoplasmatales</taxon>
        <taxon>Entomoplasmataceae</taxon>
        <taxon>Mesoplasma</taxon>
    </lineage>
</organism>
<comment type="function">
    <text evidence="1">Involved in peptide bond synthesis. Stimulates efficient translation and peptide-bond synthesis on native or reconstituted 70S ribosomes in vitro. Probably functions indirectly by altering the affinity of the ribosome for aminoacyl-tRNA, thus increasing their reactivity as acceptors for peptidyl transferase.</text>
</comment>
<comment type="pathway">
    <text evidence="1">Protein biosynthesis; polypeptide chain elongation.</text>
</comment>
<comment type="subcellular location">
    <subcellularLocation>
        <location evidence="1">Cytoplasm</location>
    </subcellularLocation>
</comment>
<comment type="similarity">
    <text evidence="1">Belongs to the elongation factor P family.</text>
</comment>
<reference key="1">
    <citation type="submission" date="2004-06" db="EMBL/GenBank/DDBJ databases">
        <authorList>
            <person name="Birren B.W."/>
            <person name="Stange-Thomann N."/>
            <person name="Hafez N."/>
            <person name="DeCaprio D."/>
            <person name="Fisher S."/>
            <person name="Butler J."/>
            <person name="Elkins T."/>
            <person name="Kodira C.D."/>
            <person name="Major J."/>
            <person name="Wang S."/>
            <person name="Nicol R."/>
            <person name="Nusbaum C."/>
        </authorList>
    </citation>
    <scope>NUCLEOTIDE SEQUENCE [LARGE SCALE GENOMIC DNA]</scope>
    <source>
        <strain>ATCC 33453 / NBRC 100688 / NCTC 11704 / L1</strain>
    </source>
</reference>
<keyword id="KW-0963">Cytoplasm</keyword>
<keyword id="KW-0251">Elongation factor</keyword>
<keyword id="KW-0648">Protein biosynthesis</keyword>
<keyword id="KW-1185">Reference proteome</keyword>
<feature type="chain" id="PRO_0000094279" description="Elongation factor P">
    <location>
        <begin position="1"/>
        <end position="185"/>
    </location>
</feature>
<dbReference type="EMBL" id="AE017263">
    <property type="protein sequence ID" value="AAT75766.1"/>
    <property type="molecule type" value="Genomic_DNA"/>
</dbReference>
<dbReference type="RefSeq" id="WP_011183306.1">
    <property type="nucleotide sequence ID" value="NC_006055.1"/>
</dbReference>
<dbReference type="RefSeq" id="YP_053650.1">
    <property type="nucleotide sequence ID" value="NC_006055.1"/>
</dbReference>
<dbReference type="SMR" id="Q6F157"/>
<dbReference type="STRING" id="265311.Mfl407"/>
<dbReference type="PaxDb" id="265311-Mfl407"/>
<dbReference type="EnsemblBacteria" id="AAT75766">
    <property type="protein sequence ID" value="AAT75766"/>
    <property type="gene ID" value="Mfl407"/>
</dbReference>
<dbReference type="GeneID" id="2898257"/>
<dbReference type="KEGG" id="mfl:Mfl407"/>
<dbReference type="PATRIC" id="fig|265311.5.peg.407"/>
<dbReference type="eggNOG" id="COG0231">
    <property type="taxonomic scope" value="Bacteria"/>
</dbReference>
<dbReference type="HOGENOM" id="CLU_074944_0_1_14"/>
<dbReference type="OrthoDB" id="9801844at2"/>
<dbReference type="UniPathway" id="UPA00345"/>
<dbReference type="Proteomes" id="UP000006647">
    <property type="component" value="Chromosome"/>
</dbReference>
<dbReference type="GO" id="GO:0005737">
    <property type="term" value="C:cytoplasm"/>
    <property type="evidence" value="ECO:0007669"/>
    <property type="project" value="UniProtKB-SubCell"/>
</dbReference>
<dbReference type="GO" id="GO:0003746">
    <property type="term" value="F:translation elongation factor activity"/>
    <property type="evidence" value="ECO:0007669"/>
    <property type="project" value="UniProtKB-UniRule"/>
</dbReference>
<dbReference type="GO" id="GO:0043043">
    <property type="term" value="P:peptide biosynthetic process"/>
    <property type="evidence" value="ECO:0007669"/>
    <property type="project" value="InterPro"/>
</dbReference>
<dbReference type="CDD" id="cd04470">
    <property type="entry name" value="S1_EF-P_repeat_1"/>
    <property type="match status" value="1"/>
</dbReference>
<dbReference type="CDD" id="cd05794">
    <property type="entry name" value="S1_EF-P_repeat_2"/>
    <property type="match status" value="1"/>
</dbReference>
<dbReference type="FunFam" id="2.30.30.30:FF:000003">
    <property type="entry name" value="Elongation factor P"/>
    <property type="match status" value="1"/>
</dbReference>
<dbReference type="FunFam" id="2.40.50.140:FF:000004">
    <property type="entry name" value="Elongation factor P"/>
    <property type="match status" value="1"/>
</dbReference>
<dbReference type="FunFam" id="2.40.50.140:FF:000009">
    <property type="entry name" value="Elongation factor P"/>
    <property type="match status" value="1"/>
</dbReference>
<dbReference type="Gene3D" id="2.30.30.30">
    <property type="match status" value="1"/>
</dbReference>
<dbReference type="Gene3D" id="2.40.50.140">
    <property type="entry name" value="Nucleic acid-binding proteins"/>
    <property type="match status" value="2"/>
</dbReference>
<dbReference type="HAMAP" id="MF_00141">
    <property type="entry name" value="EF_P"/>
    <property type="match status" value="1"/>
</dbReference>
<dbReference type="InterPro" id="IPR015365">
    <property type="entry name" value="Elong-fact-P_C"/>
</dbReference>
<dbReference type="InterPro" id="IPR012340">
    <property type="entry name" value="NA-bd_OB-fold"/>
</dbReference>
<dbReference type="InterPro" id="IPR014722">
    <property type="entry name" value="Rib_uL2_dom2"/>
</dbReference>
<dbReference type="InterPro" id="IPR020599">
    <property type="entry name" value="Transl_elong_fac_P/YeiP"/>
</dbReference>
<dbReference type="InterPro" id="IPR013185">
    <property type="entry name" value="Transl_elong_KOW-like"/>
</dbReference>
<dbReference type="InterPro" id="IPR001059">
    <property type="entry name" value="Transl_elong_P/YeiP_cen"/>
</dbReference>
<dbReference type="InterPro" id="IPR013852">
    <property type="entry name" value="Transl_elong_P/YeiP_CS"/>
</dbReference>
<dbReference type="InterPro" id="IPR011768">
    <property type="entry name" value="Transl_elongation_fac_P"/>
</dbReference>
<dbReference type="InterPro" id="IPR008991">
    <property type="entry name" value="Translation_prot_SH3-like_sf"/>
</dbReference>
<dbReference type="NCBIfam" id="TIGR00038">
    <property type="entry name" value="efp"/>
    <property type="match status" value="1"/>
</dbReference>
<dbReference type="NCBIfam" id="NF001810">
    <property type="entry name" value="PRK00529.1"/>
    <property type="match status" value="1"/>
</dbReference>
<dbReference type="PANTHER" id="PTHR30053">
    <property type="entry name" value="ELONGATION FACTOR P"/>
    <property type="match status" value="1"/>
</dbReference>
<dbReference type="PANTHER" id="PTHR30053:SF12">
    <property type="entry name" value="ELONGATION FACTOR P (EF-P) FAMILY PROTEIN"/>
    <property type="match status" value="1"/>
</dbReference>
<dbReference type="Pfam" id="PF01132">
    <property type="entry name" value="EFP"/>
    <property type="match status" value="1"/>
</dbReference>
<dbReference type="Pfam" id="PF08207">
    <property type="entry name" value="EFP_N"/>
    <property type="match status" value="1"/>
</dbReference>
<dbReference type="Pfam" id="PF09285">
    <property type="entry name" value="Elong-fact-P_C"/>
    <property type="match status" value="1"/>
</dbReference>
<dbReference type="PIRSF" id="PIRSF005901">
    <property type="entry name" value="EF-P"/>
    <property type="match status" value="1"/>
</dbReference>
<dbReference type="SMART" id="SM01185">
    <property type="entry name" value="EFP"/>
    <property type="match status" value="1"/>
</dbReference>
<dbReference type="SMART" id="SM00841">
    <property type="entry name" value="Elong-fact-P_C"/>
    <property type="match status" value="1"/>
</dbReference>
<dbReference type="SUPFAM" id="SSF50249">
    <property type="entry name" value="Nucleic acid-binding proteins"/>
    <property type="match status" value="2"/>
</dbReference>
<dbReference type="SUPFAM" id="SSF50104">
    <property type="entry name" value="Translation proteins SH3-like domain"/>
    <property type="match status" value="1"/>
</dbReference>
<dbReference type="PROSITE" id="PS01275">
    <property type="entry name" value="EFP"/>
    <property type="match status" value="1"/>
</dbReference>
<evidence type="ECO:0000255" key="1">
    <source>
        <dbReference type="HAMAP-Rule" id="MF_00141"/>
    </source>
</evidence>
<sequence length="185" mass="20513">MSVNDLRPGTTFIYEGNLFVVIEQSFSKTGRQQGKVSVKAKNLRTGSRVEITFTGGEKVEKAMIERKDMQYLYNDGTDAYLMDTDTYEQIQIPMTRLEWESKFLTDGLMIKMTEYDGEVLGISLPDKVELEVTEAEAAVKGDTTSGALKKAVVETGLDIMVPLFVNVGTKVIISTTDGKYSGRAQ</sequence>
<name>EFP_MESFL</name>
<accession>Q6F157</accession>
<gene>
    <name evidence="1" type="primary">efp</name>
    <name type="ordered locus">Mfl407</name>
</gene>
<protein>
    <recommendedName>
        <fullName evidence="1">Elongation factor P</fullName>
        <shortName evidence="1">EF-P</shortName>
    </recommendedName>
</protein>
<proteinExistence type="inferred from homology"/>